<feature type="signal peptide" evidence="2">
    <location>
        <begin position="1"/>
        <end position="30"/>
    </location>
</feature>
<feature type="propeptide" id="PRO_0000443547" evidence="39">
    <location>
        <begin position="31"/>
        <end position="40"/>
    </location>
</feature>
<feature type="chain" id="PRO_5010843605" description="Collagenase ColH">
    <location>
        <begin position="41"/>
        <end position="1021"/>
    </location>
</feature>
<feature type="domain" description="PKD 1" evidence="3">
    <location>
        <begin position="727"/>
        <end position="808"/>
    </location>
</feature>
<feature type="domain" description="PKD 2" evidence="3">
    <location>
        <begin position="816"/>
        <end position="905"/>
    </location>
</feature>
<feature type="region of interest" description="S1 metalloprotease domain" evidence="40 41">
    <location>
        <begin position="41"/>
        <end position="717"/>
    </location>
</feature>
<feature type="region of interest" description="Activator domain" evidence="36">
    <location>
        <begin position="41"/>
        <end position="320"/>
    </location>
</feature>
<feature type="region of interest" description="Catalytic subdomain" evidence="36">
    <location>
        <begin position="330"/>
        <end position="601"/>
    </location>
</feature>
<feature type="region of interest" description="Helper subdomain" evidence="36">
    <location>
        <begin position="609"/>
        <end position="721"/>
    </location>
</feature>
<feature type="region of interest" description="S2a domain" evidence="40 41">
    <location>
        <begin position="718"/>
        <end position="810"/>
    </location>
</feature>
<feature type="region of interest" description="S2b domain" evidence="40 41">
    <location>
        <begin position="811"/>
        <end position="904"/>
    </location>
</feature>
<feature type="region of interest" description="Disordered" evidence="5">
    <location>
        <begin position="903"/>
        <end position="922"/>
    </location>
</feature>
<feature type="region of interest" description="S3 collagen-binding domain" evidence="40 41">
    <location>
        <begin position="905"/>
        <end position="1021"/>
    </location>
</feature>
<feature type="region of interest" description="Collagen-binding" evidence="1 28">
    <location>
        <begin position="1002"/>
        <end position="1004"/>
    </location>
</feature>
<feature type="active site" evidence="4 40">
    <location>
        <position position="456"/>
    </location>
</feature>
<feature type="binding site" evidence="15 44">
    <location>
        <position position="421"/>
    </location>
    <ligand>
        <name>Zn(2+)</name>
        <dbReference type="ChEBI" id="CHEBI:29105"/>
        <note>catalytic</note>
    </ligand>
</feature>
<feature type="binding site" evidence="15 19 44 45 49">
    <location>
        <position position="430"/>
    </location>
    <ligand>
        <name>Ca(2+)</name>
        <dbReference type="ChEBI" id="CHEBI:29108"/>
        <label>1</label>
    </ligand>
</feature>
<feature type="binding site" evidence="4 15 19 33 44 45 49">
    <location>
        <position position="455"/>
    </location>
    <ligand>
        <name>Zn(2+)</name>
        <dbReference type="ChEBI" id="CHEBI:29105"/>
        <note>catalytic</note>
    </ligand>
</feature>
<feature type="binding site" evidence="4 15 19 33 44 45 49">
    <location>
        <position position="459"/>
    </location>
    <ligand>
        <name>Zn(2+)</name>
        <dbReference type="ChEBI" id="CHEBI:29105"/>
        <note>catalytic</note>
    </ligand>
</feature>
<feature type="binding site" evidence="15 19 44 45 49">
    <location>
        <position position="463"/>
    </location>
    <ligand>
        <name>Ca(2+)</name>
        <dbReference type="ChEBI" id="CHEBI:29108"/>
        <label>1</label>
    </ligand>
</feature>
<feature type="binding site" evidence="15 19 44 45 49">
    <location>
        <position position="467"/>
    </location>
    <ligand>
        <name>Ca(2+)</name>
        <dbReference type="ChEBI" id="CHEBI:29108"/>
        <label>1</label>
    </ligand>
</feature>
<feature type="binding site" evidence="15 19 44 45 49">
    <location>
        <position position="469"/>
    </location>
    <ligand>
        <name>Ca(2+)</name>
        <dbReference type="ChEBI" id="CHEBI:29108"/>
        <label>1</label>
    </ligand>
</feature>
<feature type="binding site" evidence="15 19 33 44 45 49">
    <location>
        <position position="487"/>
    </location>
    <ligand>
        <name>Zn(2+)</name>
        <dbReference type="ChEBI" id="CHEBI:29105"/>
        <note>catalytic</note>
    </ligand>
</feature>
<feature type="binding site" evidence="18 48">
    <location>
        <position position="725"/>
    </location>
    <ligand>
        <name>Ca(2+)</name>
        <dbReference type="ChEBI" id="CHEBI:29108"/>
        <label>2</label>
    </ligand>
</feature>
<feature type="binding site" evidence="18 48">
    <location>
        <position position="726"/>
    </location>
    <ligand>
        <name>Ca(2+)</name>
        <dbReference type="ChEBI" id="CHEBI:29108"/>
        <label>2</label>
    </ligand>
</feature>
<feature type="binding site" evidence="18 48">
    <location>
        <position position="753"/>
    </location>
    <ligand>
        <name>Ca(2+)</name>
        <dbReference type="ChEBI" id="CHEBI:29108"/>
        <label>2</label>
    </ligand>
</feature>
<feature type="binding site" evidence="18 48">
    <location>
        <position position="755"/>
    </location>
    <ligand>
        <name>Ca(2+)</name>
        <dbReference type="ChEBI" id="CHEBI:29108"/>
        <label>2</label>
    </ligand>
</feature>
<feature type="binding site" evidence="18 48">
    <location>
        <position position="794"/>
    </location>
    <ligand>
        <name>Ca(2+)</name>
        <dbReference type="ChEBI" id="CHEBI:29108"/>
        <label>2</label>
    </ligand>
</feature>
<feature type="binding site" evidence="18 46">
    <location>
        <position position="814"/>
    </location>
    <ligand>
        <name>Ca(2+)</name>
        <dbReference type="ChEBI" id="CHEBI:29108"/>
        <label>3</label>
    </ligand>
</feature>
<feature type="binding site" evidence="18 46">
    <location>
        <position position="815"/>
    </location>
    <ligand>
        <name>Ca(2+)</name>
        <dbReference type="ChEBI" id="CHEBI:29108"/>
        <label>3</label>
    </ligand>
</feature>
<feature type="binding site" evidence="18 46">
    <location>
        <position position="842"/>
    </location>
    <ligand>
        <name>Ca(2+)</name>
        <dbReference type="ChEBI" id="CHEBI:29108"/>
        <label>3</label>
    </ligand>
</feature>
<feature type="binding site" evidence="18 46">
    <location>
        <position position="844"/>
    </location>
    <ligand>
        <name>Ca(2+)</name>
        <dbReference type="ChEBI" id="CHEBI:29108"/>
        <label>3</label>
    </ligand>
</feature>
<feature type="binding site" evidence="18 46">
    <location>
        <position position="884"/>
    </location>
    <ligand>
        <name>Ca(2+)</name>
        <dbReference type="ChEBI" id="CHEBI:29108"/>
        <label>3</label>
    </ligand>
</feature>
<feature type="binding site" evidence="13 42">
    <location>
        <position position="908"/>
    </location>
    <ligand>
        <name>Ca(2+)</name>
        <dbReference type="ChEBI" id="CHEBI:29108"/>
        <label>4</label>
    </ligand>
</feature>
<feature type="binding site" evidence="13 42">
    <location>
        <position position="910"/>
    </location>
    <ligand>
        <name>Ca(2+)</name>
        <dbReference type="ChEBI" id="CHEBI:29108"/>
        <label>4</label>
    </ligand>
</feature>
<feature type="binding site" evidence="13 42 43">
    <location>
        <position position="910"/>
    </location>
    <ligand>
        <name>Ca(2+)</name>
        <dbReference type="ChEBI" id="CHEBI:29108"/>
        <label>5</label>
    </ligand>
</feature>
<feature type="binding site" evidence="13 42 43">
    <location>
        <position position="912"/>
    </location>
    <ligand>
        <name>Ca(2+)</name>
        <dbReference type="ChEBI" id="CHEBI:29108"/>
        <label>5</label>
    </ligand>
</feature>
<feature type="binding site" evidence="13 42 43">
    <location>
        <position position="913"/>
    </location>
    <ligand>
        <name>Ca(2+)</name>
        <dbReference type="ChEBI" id="CHEBI:29108"/>
        <label>5</label>
    </ligand>
</feature>
<feature type="binding site" evidence="13 42">
    <location>
        <position position="931"/>
    </location>
    <ligand>
        <name>Ca(2+)</name>
        <dbReference type="ChEBI" id="CHEBI:29108"/>
        <label>4</label>
    </ligand>
</feature>
<feature type="binding site" evidence="13 42">
    <location>
        <position position="937"/>
    </location>
    <ligand>
        <name>Ca(2+)</name>
        <dbReference type="ChEBI" id="CHEBI:29108"/>
        <label>4</label>
    </ligand>
</feature>
<feature type="binding site" evidence="13 42 43">
    <location>
        <position position="937"/>
    </location>
    <ligand>
        <name>Ca(2+)</name>
        <dbReference type="ChEBI" id="CHEBI:29108"/>
        <label>5</label>
    </ligand>
</feature>
<feature type="binding site" evidence="13 42 43">
    <location>
        <position position="938"/>
    </location>
    <ligand>
        <name>Ca(2+)</name>
        <dbReference type="ChEBI" id="CHEBI:29108"/>
        <label>5</label>
    </ligand>
</feature>
<feature type="binding site" evidence="13 42">
    <location>
        <position position="939"/>
    </location>
    <ligand>
        <name>Ca(2+)</name>
        <dbReference type="ChEBI" id="CHEBI:29108"/>
        <label>4</label>
    </ligand>
</feature>
<feature type="binding site" evidence="13 42 43">
    <location>
        <position position="939"/>
    </location>
    <ligand>
        <name>Ca(2+)</name>
        <dbReference type="ChEBI" id="CHEBI:29108"/>
        <label>5</label>
    </ligand>
</feature>
<feature type="site" description="Collagen binding" evidence="1 28">
    <location>
        <position position="977"/>
    </location>
</feature>
<feature type="mutagenesis site" description="Loss of activity, in a catalytic fragment (residues 41-717) using FALGPA as substrate." evidence="9">
    <original>G</original>
    <variation>V</variation>
    <location>
        <position position="426"/>
    </location>
</feature>
<feature type="mutagenesis site" description="No collagen degradation, about 50% zinc content." evidence="6">
    <original>H</original>
    <variation>A</variation>
    <location>
        <position position="455"/>
    </location>
</feature>
<feature type="mutagenesis site" description="No collagen degradation, about 10% zinc content." evidence="6">
    <original>H</original>
    <variation>F</variation>
    <location>
        <position position="455"/>
    </location>
</feature>
<feature type="mutagenesis site" description="No collagen degradation, wild-type zinc content." evidence="6">
    <original>E</original>
    <variation>D</variation>
    <variation>Q</variation>
    <location>
        <position position="456"/>
    </location>
</feature>
<feature type="mutagenesis site" description="Does not degrade collagen, still binds collagen." evidence="24">
    <original>E</original>
    <variation>D</variation>
    <location>
        <position position="456"/>
    </location>
</feature>
<feature type="mutagenesis site" description="No collagen degradation, about 20% zinc content." evidence="6">
    <original>H</original>
    <variation>R</variation>
    <location>
        <position position="459"/>
    </location>
</feature>
<feature type="mutagenesis site" description="Wild-type collagen degradation and zinc content." evidence="6">
    <original>N</original>
    <variation>A</variation>
    <location>
        <position position="479"/>
    </location>
</feature>
<feature type="mutagenesis site" description="About 15% collagen degradation, wild-type zinc content. KM for PZ peptide is wild-type, kcat decreases 4-fold for Ala-486." evidence="6">
    <original>E</original>
    <variation>A</variation>
    <variation>Q</variation>
    <location>
        <position position="486"/>
    </location>
</feature>
<feature type="mutagenesis site" description="About 50% collagen degradation, wild-type zinc content." evidence="6">
    <original>E</original>
    <variation>D</variation>
    <location>
        <position position="486"/>
    </location>
</feature>
<feature type="mutagenesis site" description="Less than 5% collagen degradation, 20-42% zinc content. KM for PZ peptide is 75%, kcat decreases 20-fold for Gln-487." evidence="6">
    <original>E</original>
    <variation>A</variation>
    <variation>D</variation>
    <variation>Q</variation>
    <location>
        <position position="487"/>
    </location>
</feature>
<feature type="mutagenesis site" description="Slight decrease in inhibition of collagenase activity by an N-aryl mercaptoacetamide-based inhibitor." evidence="19">
    <original>E</original>
    <variation>H</variation>
    <location>
        <position position="487"/>
    </location>
</feature>
<feature type="mutagenesis site" description="5 to 12% collagen degradation, 70% to wild-type zinc content. KM for PZ peptide is nearly wild-type, kcat decreases 15-fold for Ala-491." evidence="6">
    <original>E</original>
    <variation>A</variation>
    <variation>D</variation>
    <variation>Q</variation>
    <location>
        <position position="491"/>
    </location>
</feature>
<feature type="strand" evidence="51">
    <location>
        <begin position="345"/>
        <end position="349"/>
    </location>
</feature>
<feature type="turn" evidence="51">
    <location>
        <begin position="350"/>
        <end position="353"/>
    </location>
</feature>
<feature type="strand" evidence="51">
    <location>
        <begin position="354"/>
        <end position="358"/>
    </location>
</feature>
<feature type="helix" evidence="51">
    <location>
        <begin position="364"/>
        <end position="385"/>
    </location>
</feature>
<feature type="strand" evidence="51">
    <location>
        <begin position="391"/>
        <end position="394"/>
    </location>
</feature>
<feature type="helix" evidence="51">
    <location>
        <begin position="396"/>
        <end position="398"/>
    </location>
</feature>
<feature type="strand" evidence="51">
    <location>
        <begin position="399"/>
        <end position="407"/>
    </location>
</feature>
<feature type="helix" evidence="51">
    <location>
        <begin position="408"/>
        <end position="414"/>
    </location>
</feature>
<feature type="helix" evidence="55">
    <location>
        <begin position="415"/>
        <end position="418"/>
    </location>
</feature>
<feature type="strand" evidence="51">
    <location>
        <begin position="423"/>
        <end position="429"/>
    </location>
</feature>
<feature type="helix" evidence="51">
    <location>
        <begin position="430"/>
        <end position="432"/>
    </location>
</feature>
<feature type="strand" evidence="51">
    <location>
        <begin position="434"/>
        <end position="438"/>
    </location>
</feature>
<feature type="helix" evidence="51">
    <location>
        <begin position="442"/>
        <end position="444"/>
    </location>
</feature>
<feature type="helix" evidence="51">
    <location>
        <begin position="449"/>
        <end position="465"/>
    </location>
</feature>
<feature type="helix" evidence="51">
    <location>
        <begin position="475"/>
        <end position="480"/>
    </location>
</feature>
<feature type="helix" evidence="51">
    <location>
        <begin position="483"/>
        <end position="493"/>
    </location>
</feature>
<feature type="strand" evidence="51">
    <location>
        <begin position="498"/>
        <end position="500"/>
    </location>
</feature>
<feature type="helix" evidence="51">
    <location>
        <begin position="506"/>
        <end position="509"/>
    </location>
</feature>
<feature type="turn" evidence="51">
    <location>
        <begin position="510"/>
        <end position="514"/>
    </location>
</feature>
<feature type="helix" evidence="51">
    <location>
        <begin position="517"/>
        <end position="519"/>
    </location>
</feature>
<feature type="helix" evidence="51">
    <location>
        <begin position="523"/>
        <end position="526"/>
    </location>
</feature>
<feature type="helix" evidence="51">
    <location>
        <begin position="536"/>
        <end position="551"/>
    </location>
</feature>
<feature type="helix" evidence="51">
    <location>
        <begin position="553"/>
        <end position="564"/>
    </location>
</feature>
<feature type="helix" evidence="51">
    <location>
        <begin position="568"/>
        <end position="579"/>
    </location>
</feature>
<feature type="helix" evidence="51">
    <location>
        <begin position="582"/>
        <end position="597"/>
    </location>
</feature>
<feature type="helix" evidence="51">
    <location>
        <begin position="599"/>
        <end position="601"/>
    </location>
</feature>
<feature type="helix" evidence="51">
    <location>
        <begin position="609"/>
        <end position="612"/>
    </location>
</feature>
<feature type="helix" evidence="51">
    <location>
        <begin position="620"/>
        <end position="630"/>
    </location>
</feature>
<feature type="strand" evidence="51">
    <location>
        <begin position="634"/>
        <end position="642"/>
    </location>
</feature>
<feature type="strand" evidence="51">
    <location>
        <begin position="647"/>
        <end position="659"/>
    </location>
</feature>
<feature type="helix" evidence="51">
    <location>
        <begin position="663"/>
        <end position="681"/>
    </location>
</feature>
<feature type="helix" evidence="51">
    <location>
        <begin position="687"/>
        <end position="691"/>
    </location>
</feature>
<feature type="strand" evidence="51">
    <location>
        <begin position="693"/>
        <end position="701"/>
    </location>
</feature>
<feature type="strand" evidence="51">
    <location>
        <begin position="705"/>
        <end position="717"/>
    </location>
</feature>
<feature type="strand" evidence="53">
    <location>
        <begin position="736"/>
        <end position="739"/>
    </location>
</feature>
<feature type="strand" evidence="54">
    <location>
        <begin position="743"/>
        <end position="745"/>
    </location>
</feature>
<feature type="strand" evidence="53">
    <location>
        <begin position="758"/>
        <end position="764"/>
    </location>
</feature>
<feature type="strand" evidence="53">
    <location>
        <begin position="766"/>
        <end position="768"/>
    </location>
</feature>
<feature type="strand" evidence="54">
    <location>
        <begin position="777"/>
        <end position="779"/>
    </location>
</feature>
<feature type="strand" evidence="53">
    <location>
        <begin position="784"/>
        <end position="794"/>
    </location>
</feature>
<feature type="strand" evidence="53">
    <location>
        <begin position="799"/>
        <end position="809"/>
    </location>
</feature>
<feature type="helix" evidence="52">
    <location>
        <begin position="811"/>
        <end position="813"/>
    </location>
</feature>
<feature type="strand" evidence="52">
    <location>
        <begin position="825"/>
        <end position="828"/>
    </location>
</feature>
<feature type="strand" evidence="52">
    <location>
        <begin position="831"/>
        <end position="834"/>
    </location>
</feature>
<feature type="strand" evidence="52">
    <location>
        <begin position="847"/>
        <end position="853"/>
    </location>
</feature>
<feature type="strand" evidence="52">
    <location>
        <begin position="855"/>
        <end position="857"/>
    </location>
</feature>
<feature type="strand" evidence="52">
    <location>
        <begin position="867"/>
        <end position="869"/>
    </location>
</feature>
<feature type="strand" evidence="52">
    <location>
        <begin position="874"/>
        <end position="884"/>
    </location>
</feature>
<feature type="strand" evidence="52">
    <location>
        <begin position="889"/>
        <end position="899"/>
    </location>
</feature>
<feature type="helix" evidence="50">
    <location>
        <begin position="915"/>
        <end position="917"/>
    </location>
</feature>
<feature type="strand" evidence="50">
    <location>
        <begin position="928"/>
        <end position="932"/>
    </location>
</feature>
<feature type="strand" evidence="50">
    <location>
        <begin position="939"/>
        <end position="947"/>
    </location>
</feature>
<feature type="strand" evidence="50">
    <location>
        <begin position="949"/>
        <end position="957"/>
    </location>
</feature>
<feature type="strand" evidence="50">
    <location>
        <begin position="959"/>
        <end position="968"/>
    </location>
</feature>
<feature type="strand" evidence="50">
    <location>
        <begin position="974"/>
        <end position="977"/>
    </location>
</feature>
<feature type="strand" evidence="50">
    <location>
        <begin position="982"/>
        <end position="991"/>
    </location>
</feature>
<feature type="strand" evidence="50">
    <location>
        <begin position="995"/>
        <end position="1005"/>
    </location>
</feature>
<feature type="strand" evidence="50">
    <location>
        <begin position="1009"/>
        <end position="1017"/>
    </location>
</feature>
<gene>
    <name evidence="30" type="primary">colH</name>
</gene>
<keyword id="KW-0002">3D-structure</keyword>
<keyword id="KW-0106">Calcium</keyword>
<keyword id="KW-0903">Direct protein sequencing</keyword>
<keyword id="KW-0378">Hydrolase</keyword>
<keyword id="KW-0479">Metal-binding</keyword>
<keyword id="KW-0482">Metalloprotease</keyword>
<keyword id="KW-0582">Pharmaceutical</keyword>
<keyword id="KW-0645">Protease</keyword>
<keyword id="KW-0677">Repeat</keyword>
<keyword id="KW-0964">Secreted</keyword>
<keyword id="KW-0732">Signal</keyword>
<keyword id="KW-0843">Virulence</keyword>
<keyword id="KW-0862">Zinc</keyword>
<keyword id="KW-0865">Zymogen</keyword>
<evidence type="ECO:0000250" key="1">
    <source>
        <dbReference type="UniProtKB" id="Q9X721"/>
    </source>
</evidence>
<evidence type="ECO:0000255" key="2"/>
<evidence type="ECO:0000255" key="3">
    <source>
        <dbReference type="PROSITE-ProRule" id="PRU00151"/>
    </source>
</evidence>
<evidence type="ECO:0000255" key="4">
    <source>
        <dbReference type="PROSITE-ProRule" id="PRU10095"/>
    </source>
</evidence>
<evidence type="ECO:0000256" key="5">
    <source>
        <dbReference type="SAM" id="MobiDB-lite"/>
    </source>
</evidence>
<evidence type="ECO:0000269" key="6">
    <source>
    </source>
</evidence>
<evidence type="ECO:0000269" key="7">
    <source>
    </source>
</evidence>
<evidence type="ECO:0000269" key="8">
    <source>
    </source>
</evidence>
<evidence type="ECO:0000269" key="9">
    <source>
    </source>
</evidence>
<evidence type="ECO:0000269" key="10">
    <source>
    </source>
</evidence>
<evidence type="ECO:0000269" key="11">
    <source>
    </source>
</evidence>
<evidence type="ECO:0000269" key="12">
    <source>
    </source>
</evidence>
<evidence type="ECO:0000269" key="13">
    <source>
    </source>
</evidence>
<evidence type="ECO:0000269" key="14">
    <source>
    </source>
</evidence>
<evidence type="ECO:0000269" key="15">
    <source>
    </source>
</evidence>
<evidence type="ECO:0000269" key="16">
    <source>
    </source>
</evidence>
<evidence type="ECO:0000269" key="17">
    <source>
    </source>
</evidence>
<evidence type="ECO:0000269" key="18">
    <source>
    </source>
</evidence>
<evidence type="ECO:0000269" key="19">
    <source>
    </source>
</evidence>
<evidence type="ECO:0000269" key="20">
    <source>
    </source>
</evidence>
<evidence type="ECO:0000269" key="21">
    <source>
    </source>
</evidence>
<evidence type="ECO:0000269" key="22">
    <source>
    </source>
</evidence>
<evidence type="ECO:0000269" key="23">
    <source>
    </source>
</evidence>
<evidence type="ECO:0000269" key="24">
    <source>
    </source>
</evidence>
<evidence type="ECO:0000269" key="25">
    <source>
    </source>
</evidence>
<evidence type="ECO:0000269" key="26">
    <source>
    </source>
</evidence>
<evidence type="ECO:0000269" key="27">
    <source>
    </source>
</evidence>
<evidence type="ECO:0000303" key="28">
    <source>
    </source>
</evidence>
<evidence type="ECO:0000303" key="29">
    <source>
    </source>
</evidence>
<evidence type="ECO:0000303" key="30">
    <source>
    </source>
</evidence>
<evidence type="ECO:0000303" key="31">
    <source>
    </source>
</evidence>
<evidence type="ECO:0000305" key="32"/>
<evidence type="ECO:0000305" key="33">
    <source>
    </source>
</evidence>
<evidence type="ECO:0000305" key="34">
    <source>
    </source>
</evidence>
<evidence type="ECO:0000305" key="35">
    <source>
    </source>
</evidence>
<evidence type="ECO:0000305" key="36">
    <source>
    </source>
</evidence>
<evidence type="ECO:0000305" key="37">
    <source>
    </source>
</evidence>
<evidence type="ECO:0000305" key="38">
    <source>
    </source>
</evidence>
<evidence type="ECO:0000305" key="39">
    <source>
    </source>
</evidence>
<evidence type="ECO:0000305" key="40">
    <source>
    </source>
</evidence>
<evidence type="ECO:0000305" key="41">
    <source>
    </source>
</evidence>
<evidence type="ECO:0007744" key="42">
    <source>
        <dbReference type="PDB" id="3JQW"/>
    </source>
</evidence>
<evidence type="ECO:0007744" key="43">
    <source>
        <dbReference type="PDB" id="3JQX"/>
    </source>
</evidence>
<evidence type="ECO:0007744" key="44">
    <source>
        <dbReference type="PDB" id="4AR1"/>
    </source>
</evidence>
<evidence type="ECO:0007744" key="45">
    <source>
        <dbReference type="PDB" id="4ARF"/>
    </source>
</evidence>
<evidence type="ECO:0007744" key="46">
    <source>
        <dbReference type="PDB" id="4JGU"/>
    </source>
</evidence>
<evidence type="ECO:0007744" key="47">
    <source>
        <dbReference type="PDB" id="4U6T"/>
    </source>
</evidence>
<evidence type="ECO:0007744" key="48">
    <source>
        <dbReference type="PDB" id="4U7K"/>
    </source>
</evidence>
<evidence type="ECO:0007744" key="49">
    <source>
        <dbReference type="PDB" id="5O7E"/>
    </source>
</evidence>
<evidence type="ECO:0007829" key="50">
    <source>
        <dbReference type="PDB" id="3JQW"/>
    </source>
</evidence>
<evidence type="ECO:0007829" key="51">
    <source>
        <dbReference type="PDB" id="4ARF"/>
    </source>
</evidence>
<evidence type="ECO:0007829" key="52">
    <source>
        <dbReference type="PDB" id="4JGU"/>
    </source>
</evidence>
<evidence type="ECO:0007829" key="53">
    <source>
        <dbReference type="PDB" id="4U6T"/>
    </source>
</evidence>
<evidence type="ECO:0007829" key="54">
    <source>
        <dbReference type="PDB" id="4U7K"/>
    </source>
</evidence>
<evidence type="ECO:0007829" key="55">
    <source>
        <dbReference type="PDB" id="5O7E"/>
    </source>
</evidence>
<dbReference type="EC" id="3.4.24.3" evidence="20"/>
<dbReference type="EMBL" id="AB014075">
    <property type="protein sequence ID" value="BAA34542.1"/>
    <property type="molecule type" value="Genomic_DNA"/>
</dbReference>
<dbReference type="EMBL" id="D29981">
    <property type="protein sequence ID" value="BAA06251.1"/>
    <property type="molecule type" value="Genomic_DNA"/>
</dbReference>
<dbReference type="PIR" id="I40805">
    <property type="entry name" value="I40805"/>
</dbReference>
<dbReference type="RefSeq" id="WP_171012037.1">
    <property type="nucleotide sequence ID" value="NZ_CBCRUQ010000003.1"/>
</dbReference>
<dbReference type="PDB" id="3JQW">
    <property type="method" value="X-ray"/>
    <property type="resolution" value="2.00 A"/>
    <property type="chains" value="A/B/C=902-1021"/>
</dbReference>
<dbReference type="PDB" id="3JQX">
    <property type="method" value="X-ray"/>
    <property type="resolution" value="2.20 A"/>
    <property type="chains" value="A/B/C=902-1021"/>
</dbReference>
<dbReference type="PDB" id="4AR1">
    <property type="method" value="X-ray"/>
    <property type="resolution" value="2.01 A"/>
    <property type="chains" value="A=331-721"/>
</dbReference>
<dbReference type="PDB" id="4ARF">
    <property type="method" value="X-ray"/>
    <property type="resolution" value="1.77 A"/>
    <property type="chains" value="A=331-721"/>
</dbReference>
<dbReference type="PDB" id="4JGU">
    <property type="method" value="X-ray"/>
    <property type="resolution" value="1.42 A"/>
    <property type="chains" value="A/B=806-900"/>
</dbReference>
<dbReference type="PDB" id="4U6T">
    <property type="method" value="X-ray"/>
    <property type="resolution" value="1.76 A"/>
    <property type="chains" value="A/B/C/D=725-810"/>
</dbReference>
<dbReference type="PDB" id="4U7K">
    <property type="method" value="X-ray"/>
    <property type="resolution" value="1.91 A"/>
    <property type="chains" value="A/B/C/D/E/F/G/H=724-810"/>
</dbReference>
<dbReference type="PDB" id="5O7E">
    <property type="method" value="X-ray"/>
    <property type="resolution" value="1.87 A"/>
    <property type="chains" value="A=331-721"/>
</dbReference>
<dbReference type="PDB" id="7ZOC">
    <property type="method" value="X-ray"/>
    <property type="resolution" value="1.91 A"/>
    <property type="chains" value="A=331-721"/>
</dbReference>
<dbReference type="PDBsum" id="3JQW"/>
<dbReference type="PDBsum" id="3JQX"/>
<dbReference type="PDBsum" id="4AR1"/>
<dbReference type="PDBsum" id="4ARF"/>
<dbReference type="PDBsum" id="4JGU"/>
<dbReference type="PDBsum" id="4U6T"/>
<dbReference type="PDBsum" id="4U7K"/>
<dbReference type="PDBsum" id="5O7E"/>
<dbReference type="PDBsum" id="7ZOC"/>
<dbReference type="SASBDB" id="Q46085"/>
<dbReference type="SMR" id="Q46085"/>
<dbReference type="BindingDB" id="Q46085"/>
<dbReference type="ChEMBL" id="CHEMBL4630869"/>
<dbReference type="MEROPS" id="M09.003"/>
<dbReference type="BRENDA" id="3.4.24.3">
    <property type="organism ID" value="1481"/>
</dbReference>
<dbReference type="SABIO-RK" id="Q46085"/>
<dbReference type="EvolutionaryTrace" id="Q46085"/>
<dbReference type="GO" id="GO:0005576">
    <property type="term" value="C:extracellular region"/>
    <property type="evidence" value="ECO:0000314"/>
    <property type="project" value="UniProtKB"/>
</dbReference>
<dbReference type="GO" id="GO:0005509">
    <property type="term" value="F:calcium ion binding"/>
    <property type="evidence" value="ECO:0000314"/>
    <property type="project" value="UniProtKB"/>
</dbReference>
<dbReference type="GO" id="GO:0005518">
    <property type="term" value="F:collagen binding"/>
    <property type="evidence" value="ECO:0000314"/>
    <property type="project" value="UniProtKB"/>
</dbReference>
<dbReference type="GO" id="GO:0004175">
    <property type="term" value="F:endopeptidase activity"/>
    <property type="evidence" value="ECO:0000314"/>
    <property type="project" value="UniProtKB"/>
</dbReference>
<dbReference type="GO" id="GO:0004222">
    <property type="term" value="F:metalloendopeptidase activity"/>
    <property type="evidence" value="ECO:0000315"/>
    <property type="project" value="UniProtKB"/>
</dbReference>
<dbReference type="GO" id="GO:0034701">
    <property type="term" value="F:tripeptidase activity"/>
    <property type="evidence" value="ECO:0000314"/>
    <property type="project" value="UniProtKB"/>
</dbReference>
<dbReference type="GO" id="GO:0008270">
    <property type="term" value="F:zinc ion binding"/>
    <property type="evidence" value="ECO:0000314"/>
    <property type="project" value="UniProtKB"/>
</dbReference>
<dbReference type="GO" id="GO:0032963">
    <property type="term" value="P:collagen metabolic process"/>
    <property type="evidence" value="ECO:0000314"/>
    <property type="project" value="UniProtKB"/>
</dbReference>
<dbReference type="GO" id="GO:0006508">
    <property type="term" value="P:proteolysis"/>
    <property type="evidence" value="ECO:0007669"/>
    <property type="project" value="UniProtKB-KW"/>
</dbReference>
<dbReference type="CDD" id="cd00146">
    <property type="entry name" value="PKD"/>
    <property type="match status" value="2"/>
</dbReference>
<dbReference type="FunFam" id="2.60.40.10:FF:000270">
    <property type="entry name" value="Cell surface protein"/>
    <property type="match status" value="2"/>
</dbReference>
<dbReference type="FunFam" id="1.10.390.20:FF:000001">
    <property type="entry name" value="Microbial collagenase"/>
    <property type="match status" value="1"/>
</dbReference>
<dbReference type="FunFam" id="2.60.120.380:FF:000012">
    <property type="entry name" value="Microbial collagenase"/>
    <property type="match status" value="1"/>
</dbReference>
<dbReference type="Gene3D" id="1.10.390.20">
    <property type="match status" value="1"/>
</dbReference>
<dbReference type="Gene3D" id="2.60.120.380">
    <property type="match status" value="1"/>
</dbReference>
<dbReference type="Gene3D" id="3.30.980.50">
    <property type="match status" value="1"/>
</dbReference>
<dbReference type="Gene3D" id="3.40.30.160">
    <property type="entry name" value="Collagenase ColT, N-terminal domain"/>
    <property type="match status" value="1"/>
</dbReference>
<dbReference type="Gene3D" id="2.60.40.10">
    <property type="entry name" value="Immunoglobulins"/>
    <property type="match status" value="2"/>
</dbReference>
<dbReference type="InterPro" id="IPR041379">
    <property type="entry name" value="ColG_subdomain"/>
</dbReference>
<dbReference type="InterPro" id="IPR013320">
    <property type="entry name" value="ConA-like_dom_sf"/>
</dbReference>
<dbReference type="InterPro" id="IPR013783">
    <property type="entry name" value="Ig-like_fold"/>
</dbReference>
<dbReference type="InterPro" id="IPR007280">
    <property type="entry name" value="Peptidase_C_arc/bac"/>
</dbReference>
<dbReference type="InterPro" id="IPR013661">
    <property type="entry name" value="Peptidase_M9_N_dom"/>
</dbReference>
<dbReference type="InterPro" id="IPR002169">
    <property type="entry name" value="Peptidase_M9A/M9B"/>
</dbReference>
<dbReference type="InterPro" id="IPR022409">
    <property type="entry name" value="PKD/Chitinase_dom"/>
</dbReference>
<dbReference type="InterPro" id="IPR000601">
    <property type="entry name" value="PKD_dom"/>
</dbReference>
<dbReference type="InterPro" id="IPR035986">
    <property type="entry name" value="PKD_dom_sf"/>
</dbReference>
<dbReference type="PANTHER" id="PTHR13062">
    <property type="entry name" value="COLLAGENASE"/>
    <property type="match status" value="1"/>
</dbReference>
<dbReference type="PANTHER" id="PTHR13062:SF9">
    <property type="entry name" value="MICROBIAL COLLAGENASE"/>
    <property type="match status" value="1"/>
</dbReference>
<dbReference type="Pfam" id="PF18496">
    <property type="entry name" value="ColG_sub"/>
    <property type="match status" value="1"/>
</dbReference>
<dbReference type="Pfam" id="PF01752">
    <property type="entry name" value="Peptidase_M9"/>
    <property type="match status" value="1"/>
</dbReference>
<dbReference type="Pfam" id="PF08453">
    <property type="entry name" value="Peptidase_M9_N"/>
    <property type="match status" value="1"/>
</dbReference>
<dbReference type="Pfam" id="PF18911">
    <property type="entry name" value="PKD_4"/>
    <property type="match status" value="2"/>
</dbReference>
<dbReference type="Pfam" id="PF04151">
    <property type="entry name" value="PPC"/>
    <property type="match status" value="1"/>
</dbReference>
<dbReference type="PRINTS" id="PR00931">
    <property type="entry name" value="MICOLLPTASE"/>
</dbReference>
<dbReference type="SMART" id="SM00089">
    <property type="entry name" value="PKD"/>
    <property type="match status" value="2"/>
</dbReference>
<dbReference type="SUPFAM" id="SSF89260">
    <property type="entry name" value="Collagen-binding domain"/>
    <property type="match status" value="1"/>
</dbReference>
<dbReference type="SUPFAM" id="SSF49899">
    <property type="entry name" value="Concanavalin A-like lectins/glucanases"/>
    <property type="match status" value="1"/>
</dbReference>
<dbReference type="SUPFAM" id="SSF49299">
    <property type="entry name" value="PKD domain"/>
    <property type="match status" value="2"/>
</dbReference>
<dbReference type="PROSITE" id="PS50093">
    <property type="entry name" value="PKD"/>
    <property type="match status" value="2"/>
</dbReference>
<dbReference type="PROSITE" id="PS00142">
    <property type="entry name" value="ZINC_PROTEASE"/>
    <property type="match status" value="1"/>
</dbReference>
<sequence>MKRKCLSKRLMLAITMATIFTVNSTLPIYAAVDKNNATAAVQNESKRYTVSYLKTLNYYDLVDLLVKTEIENLPDLFQYSSDAKEFYGNKTRMSFIMDEIGRRAPQYTEIDHKGIPTLVEVVRAGFYLGFHNKELNEINKRSFKERVIPSILAIQKNPNFKLGTEVQDKIVSATGLLAGNETAPPEVVNNFTPILQDCIKNIDRYALDDLKSKALFNVLAAPTYDITEYLRATKEKPENTPWYGKIDGFINELKKLALYGKINDNNSWIIDNGIYHIAPLGKLHSNNKIGIETLTEVMKVYPYLSMQHLQSADQIKRHYDSKDAEGNKIPLDKFKKEGKEKYCPKTYTFDDGKVIIKAGARVEEEKVKRLYWASKEVNSQFFRVYGIDKPLEEGNPDDILTMVIYNSPEEYKLNSVLYGYDTNNGGMYIEPEGTFFTYEREAQESTYTLEELFRHEYTHYLQGRYAVPGQWGRTKLYDNDRLTWYEEGGAELFAGSTRTSGILPRKSIVSNIHNTTRNNRYKLSDTVHSKYGASFEFYNYACMFMDYMYNKDMGILNKLNDLAKNNDVDGYDNYIRDLSSNYALNDKYQDHMQERIDNYENLTVPFVADDYLVRHAYKNPNEIYSEISEVAKLKDAKSEVKKSQYFSTFTLRGSYTGGASKGKLEDQKAMNKFIDDSLKKLDTYSWSGYKTLTAYFTNYKVDSSNRVTYDVVFHGYLPNEGDSKNSLPYGKINGTYKGTEKEKIKFSSEGSFDPDGKIVSYEWDFGDGNKSNEENPEHSYDKVGTYTVKLKVTDDKGESSVSTTTAEIKDLSENKLPVIYMHVPKSGALNQKVVFYGKGTYDPDGSIAGYQWDFGDGSDFSSEQNPSHVYTKKGEYTVTLRVMDSSGQMSEKTMKIKITDPVYPIGTEKEPNNSKETASGPIVPGIPVSGTIENTSDQDYFYFDVITPGEVKIDINKLGYGGATWVVYDENNNAVSYATDDGQNLSGKFKADKPGRYYIHLYMFNGSYMPYRINIEGSVGR</sequence>
<protein>
    <recommendedName>
        <fullName evidence="30">Collagenase ColH</fullName>
        <ecNumber evidence="20">3.4.24.3</ecNumber>
    </recommendedName>
    <alternativeName>
        <fullName evidence="29 31">Class II collagenase</fullName>
    </alternativeName>
    <alternativeName>
        <fullName evidence="30">Gelatinase ColH</fullName>
    </alternativeName>
    <alternativeName>
        <fullName>Microbial collagenase</fullName>
    </alternativeName>
</protein>
<reference key="1">
    <citation type="journal article" date="1994" name="J. Bacteriol.">
        <title>Cloning and nucleotide sequence analysis of the colH gene from Clostridium histolyticum encoding a collagenase and a gelatinase.</title>
        <authorList>
            <person name="Yoshihara K."/>
            <person name="Matsushita O."/>
            <person name="Minami J."/>
            <person name="Okabe A."/>
        </authorList>
    </citation>
    <scope>NUCLEOTIDE SEQUENCE [GENOMIC DNA]</scope>
    <scope>PROTEIN SEQUENCE OF 41-79</scope>
    <scope>FUNCTION</scope>
    <scope>SUBCELLULAR LOCATION</scope>
    <scope>PROTEOLYTIC CLEAVAGE</scope>
    <source>
        <strain>ATCC 19401 / DSM 2158 / JCM 1403 / NCIMB 503 / NCTC 503</strain>
    </source>
</reference>
<reference key="2">
    <citation type="journal article" date="1999" name="J. Bacteriol.">
        <title>Gene duplication and multiplicity of collagenases in Clostridium histolyticum.</title>
        <authorList>
            <person name="Matsushita O."/>
            <person name="Jung C.-M."/>
            <person name="Katayama S."/>
            <person name="Minami J."/>
            <person name="Takahashi Y."/>
            <person name="Okabe A."/>
        </authorList>
    </citation>
    <scope>NUCLEOTIDE SEQUENCE [GENOMIC DNA]</scope>
    <scope>PROTEIN SEQUENCE OF N-TERMINUS</scope>
    <scope>DOMAIN</scope>
    <scope>PROTEOLYTIC CLEAVAGE</scope>
    <source>
        <strain>ATCC 19401 / DSM 2158 / JCM 1403 / NCIMB 503 / NCTC 503</strain>
    </source>
</reference>
<reference key="3">
    <citation type="journal article" date="1984" name="Biochemistry">
        <title>Characterization of the individual collagenases from Clostridium histolyticum.</title>
        <authorList>
            <person name="Bond M.D."/>
            <person name="Van Wart H.E."/>
        </authorList>
    </citation>
    <scope>COFACTOR</scope>
    <scope>CLASSIFICATION</scope>
</reference>
<reference key="4">
    <citation type="journal article" date="1985" name="Biochemistry">
        <title>Mode of hydrolysis of collagen-like peptides by class I and class II Clostridium histolyticum collagenases: evidence for both endopeptidase and tripeptidylcarboxypeptidase activities.</title>
        <authorList>
            <person name="Mookhtiar K.A."/>
            <person name="Steinbrink D.R."/>
            <person name="Van Wart H.E."/>
        </authorList>
    </citation>
    <scope>FUNCTION</scope>
    <scope>CATALYTIC ACTIVITY</scope>
</reference>
<reference key="5">
    <citation type="journal article" date="1993" name="J. Urol.">
        <title>Collagenase versus placebo in the treatment of Peyronie's disease: a double-blind study.</title>
        <authorList>
            <person name="Gelbard M.K."/>
            <person name="James K."/>
            <person name="Riach P."/>
            <person name="Dorey F."/>
        </authorList>
    </citation>
    <scope>PRELIMINARY STUDIES FOR PHARMACEUTICAL USE FOR TREATMENT OF PEYRONIE DISEASE</scope>
</reference>
<reference key="6">
    <citation type="journal article" date="1998" name="J. Biol. Chem.">
        <title>A study of the collagen-binding domain of a 116-kDa Clostridium histolyticum collagenase.</title>
        <authorList>
            <person name="Matsushita O."/>
            <person name="Jung C.M."/>
            <person name="Minami J."/>
            <person name="Katayama S."/>
            <person name="Nishi N."/>
            <person name="Okabe A."/>
        </authorList>
    </citation>
    <scope>FUNCTION</scope>
    <scope>POSSIBLE ACTIVE SITE</scope>
    <scope>ACTIVITY REGULATION</scope>
    <scope>DOMAIN</scope>
    <scope>COLLAGEN-BINDING</scope>
    <scope>MUTAGENESIS OF GLU-456</scope>
    <source>
        <strain>ATCC 19401 / DSM 2158 / JCM 1403 / NCIMB 503 / NCTC 503</strain>
    </source>
</reference>
<reference key="7">
    <citation type="journal article" date="1998" name="Placenta">
        <title>The potential of collagenase as a new therapy for separation of human retained placenta: hydrolytic potency on human, equine and bovine placentae.</title>
        <authorList>
            <person name="Fecteau K.A."/>
            <person name="Haffner J.C."/>
            <person name="Eiler H."/>
        </authorList>
    </citation>
    <scope>BIOTECHNOLOGY USE IN TREATING RETAINED PLACENTA</scope>
</reference>
<reference key="8">
    <citation type="journal article" date="1998" name="Proc. Natl. Acad. Sci. U.S.A.">
        <title>Collagen-binding growth factors: production and characterization of functional fusion proteins having a collagen-binding domain.</title>
        <authorList>
            <person name="Nishi N."/>
            <person name="Matsushita O."/>
            <person name="Yuube K."/>
            <person name="Miyanaka H."/>
            <person name="Okabe A."/>
            <person name="Wada F."/>
        </authorList>
    </citation>
    <scope>BIOTECHNOLOGY TO ANCHOR PROTEINS TO EXTRACELLULAR MATRIX</scope>
</reference>
<reference key="9">
    <citation type="journal article" date="1999" name="J. Bacteriol.">
        <title>Identification of metal ligands in the Clostridium histolyticum ColH collagenase.</title>
        <authorList>
            <person name="Jung C.M."/>
            <person name="Matsushita O."/>
            <person name="Katayama S."/>
            <person name="Minami J."/>
            <person name="Sakurai J."/>
            <person name="Okabe A."/>
        </authorList>
    </citation>
    <scope>CATALYTIC ACTIVITY</scope>
    <scope>COFACTOR</scope>
    <scope>BIOPHYSICOCHEMICAL PROPERTIES</scope>
    <scope>MUTAGENESIS OF HIS-455; GLU-456; HIS-459; ASN-479; GLU-486; GLU-487 AND GLU-491</scope>
</reference>
<reference key="10">
    <citation type="journal article" date="2000" name="J. Hand Surg. Am.">
        <title>Enzyme injection as nonsurgical treatment of Dupuytren's disease.</title>
        <authorList>
            <person name="Badalamente M.A."/>
            <person name="Hurst L.C."/>
        </authorList>
    </citation>
    <scope>PHARMACEUTICAL USE FOR TREATMENT OF DUPUYTREN DISEASE</scope>
</reference>
<reference key="11">
    <citation type="journal article" date="2008" name="Transplant. Proc.">
        <title>Development and characterization of a collagen degradation assay to assess purified collagenase used in islet isolation.</title>
        <authorList>
            <person name="McCarthy R.C."/>
            <person name="Spurlin B."/>
            <person name="Wright M.J."/>
            <person name="Breite A.G."/>
            <person name="Sturdevant L.K."/>
            <person name="Dwulet C.S."/>
            <person name="Dwulet F.E."/>
        </authorList>
    </citation>
    <scope>FUNCTION</scope>
    <scope>SUBCELLULAR LOCATION</scope>
    <scope>BIOTECHNOLOGY FOR ISOLATION OF PANCREAS ISLET CELLS</scope>
</reference>
<reference key="12">
    <citation type="journal article" date="2009" name="Biol. Chem.">
        <title>Biochemical characterization of the catalytic domains of three different Clostridial collagenases.</title>
        <authorList>
            <person name="Eckhard U."/>
            <person name="Schoenauer E."/>
            <person name="Ducka P."/>
            <person name="Briza P."/>
            <person name="Nuess D."/>
            <person name="Brandstetter H."/>
        </authorList>
    </citation>
    <scope>FUNCTION</scope>
    <scope>CATALYTIC ACTIVITY</scope>
    <scope>ACTIVITY REGULATION</scope>
    <scope>BIOPHYSICOCHEMICAL PROPERTIES</scope>
    <scope>DOMAIN</scope>
    <scope>MUTAGENESIS OF GLY-426</scope>
</reference>
<reference key="13">
    <citation type="journal article" date="2009" name="J. Wound Ostomy Continence Nurs.">
        <title>Collagenase Santyl ointment: a selective agent for wound debridement.</title>
        <authorList>
            <person name="Shi L."/>
            <person name="Carson D."/>
        </authorList>
    </citation>
    <scope>PHARMACEUTICAL USES FOR WOUND TREATMENT AND BURN DEBRIDEMENT</scope>
</reference>
<reference key="14">
    <citation type="journal article" date="2009" name="N. Engl. J. Med.">
        <title>Injectable collagenase clostridium histolyticum for Dupuytren's contracture.</title>
        <authorList>
            <consortium name="CORD I Study Group"/>
            <person name="Hurst L.C."/>
            <person name="Badalamente M.A."/>
            <person name="Hentz V.R."/>
            <person name="Hotchkiss R.N."/>
            <person name="Kaplan F.T."/>
            <person name="Meals R.A."/>
            <person name="Smith T.M."/>
            <person name="Rodzvilla J."/>
        </authorList>
    </citation>
    <scope>PHARMACEUTICAL USES FOR TREATMENT OF DUPUYTREN DISEASE</scope>
</reference>
<reference key="15">
    <citation type="journal article" date="2011" name="Transplant. Proc.">
        <title>Characterization and functional assessment of Clostridium histolyticum class I (C1) collagenases and the synergistic degradation of native collagen in enzyme mixtures containing class II (C2) collagenase.</title>
        <authorList>
            <person name="Breite A.G."/>
            <person name="McCarthy R.C."/>
            <person name="Dwulet F.E."/>
        </authorList>
    </citation>
    <scope>IDENTIFICATION BY MASS SPECTROMETRY</scope>
    <scope>FUNCTION</scope>
    <scope>SUBCELLULAR LOCATION</scope>
    <scope>BIOTECHNOLOGY FOR ISOLATION OF PANCREAS ISLET CELLS</scope>
</reference>
<reference key="16">
    <citation type="journal article" date="2013" name="Biophys. J.">
        <title>Solution structure of clostridial collagenase H and its calcium-dependent global conformation change.</title>
        <authorList>
            <person name="Ohbayashi N."/>
            <person name="Matsumoto T."/>
            <person name="Shima H."/>
            <person name="Goto M."/>
            <person name="Watanabe K."/>
            <person name="Yamano A."/>
            <person name="Katoh Y."/>
            <person name="Igarashi K."/>
            <person name="Yamagata Y."/>
            <person name="Murayama K."/>
        </authorList>
    </citation>
    <scope>COFACTOR</scope>
    <scope>DOMAIN</scope>
</reference>
<reference key="17">
    <citation type="journal article" date="2014" name="J. Proteomics">
        <title>Proteomic protease specificity profiling of clostridial collagenases reveals their intrinsic nature as dedicated degraders of collagen.</title>
        <authorList>
            <person name="Eckhard U."/>
            <person name="Huesgen P.F."/>
            <person name="Brandstetter H."/>
            <person name="Overall C.M."/>
        </authorList>
    </citation>
    <scope>FUNCTION</scope>
    <scope>CATALYTIC ACTIVITY</scope>
</reference>
<reference key="18">
    <citation type="journal article" date="2015" name="BJU Int.">
        <title>Clinical efficacy of collagenase Clostridium histolyticum in the treatment of Peyronie's disease by subgroup: results from two large, double-blind, randomized, placebo-controlled, phase III studies.</title>
        <authorList>
            <person name="Lipshultz L.I."/>
            <person name="Goldstein I."/>
            <person name="Seftel A.D."/>
            <person name="Kaufman G.J."/>
            <person name="Smith T.M."/>
            <person name="Tursi J.P."/>
            <person name="Burnett A.L."/>
        </authorList>
    </citation>
    <scope>PHARMACEUTICAL USE FOR TREATMENT OF PEYRONIE DISEASE</scope>
</reference>
<reference evidence="42 43" key="19">
    <citation type="journal article" date="2013" name="J. Bacteriol.">
        <title>Structural comparison of ColH and ColG collagen-binding domains from Clostridium histolyticum.</title>
        <authorList>
            <person name="Bauer R."/>
            <person name="Wilson J.J."/>
            <person name="Philominathan S.T."/>
            <person name="Davis D."/>
            <person name="Matsushita O."/>
            <person name="Sakon J."/>
        </authorList>
    </citation>
    <scope>X-RAY CRYSTALLOGRAPHY (2.00 ANGSTROMS) OF 902-1021 IN COMPLEX WITH CALCIUM</scope>
    <scope>COFACTOR</scope>
    <scope>DOMAIN</scope>
    <scope>COLLAGEN-BINDING</scope>
</reference>
<reference evidence="44 45" key="20">
    <citation type="journal article" date="2013" name="J. Biol. Chem.">
        <title>Structural basis for activity regulation and substrate preference of clostridial collagenases G, H, and T.</title>
        <authorList>
            <person name="Eckhard U."/>
            <person name="Schonauer E."/>
            <person name="Brandstetter H."/>
        </authorList>
    </citation>
    <scope>X-RAY CRYSTALLOGRAPHY (1.77 ANGSTROMS) OF 331-721 IN PRESENCE OR ABSENCE OF INHIBITOR AND IN COMPLEX WITH CALCIUM AND ZINC</scope>
    <scope>FUNCTION</scope>
    <scope>COFACTOR</scope>
    <scope>DOMAIN</scope>
</reference>
<reference evidence="46 47 48" key="21">
    <citation type="journal article" date="2015" name="Acta Crystallogr. D">
        <title>Structures of three polycystic kidney disease-like domains from Clostridium histolyticum collagenases ColG and ColH.</title>
        <authorList>
            <person name="Bauer R."/>
            <person name="Janowska K."/>
            <person name="Taylor K."/>
            <person name="Jordan B."/>
            <person name="Gann S."/>
            <person name="Janowski T."/>
            <person name="Latimer E.C."/>
            <person name="Matsushita O."/>
            <person name="Sakon J."/>
        </authorList>
    </citation>
    <scope>X-RAY CRYSTALLOGRAPHY (1.76 ANGSTROMS) OF 725-810 IN COMPLEX WITH AND WITHOUT CALCIUM</scope>
    <scope>X-RAY CRYSTALLOGRAPHY (1.42 ANGSTROMS) OF 806-900 IN COMPLEX WITH CALCIUM</scope>
    <scope>COFACTOR</scope>
    <scope>DOMAIN</scope>
</reference>
<reference evidence="49" key="22">
    <citation type="journal article" date="2017" name="J. Am. Chem. Soc.">
        <title>Discovery of a potent inhibitor class with high selectivity toward clostridial collagenases.</title>
        <authorList>
            <person name="Schoenauer E."/>
            <person name="Kany A.M."/>
            <person name="Haupenthal J."/>
            <person name="Huesecken K."/>
            <person name="Hoppe I.J."/>
            <person name="Voos K."/>
            <person name="Yahiaoui S."/>
            <person name="Elsaesser B."/>
            <person name="Ducho C."/>
            <person name="Brandstetter H."/>
            <person name="Hartmann R.W."/>
        </authorList>
    </citation>
    <scope>X-RAY CRYSTALLOGRAPHY (1.87 ANGSTROMS) OF 331-721 IN COMPLEX WITH CALCIUM; ZINC AND INHIBITOR</scope>
    <scope>FUNCTION</scope>
    <scope>CATALYTIC ACTIVITY</scope>
    <scope>COFACTOR</scope>
    <scope>ACTIVITY REGULATION</scope>
    <scope>BIOPHYSICOCHEMICAL PROPERTIES</scope>
    <scope>BIOTECHNOLOGY FOR ANTI-INFECTIVE AGENTS</scope>
    <scope>MUTAGENESIS OF GLU-487</scope>
</reference>
<organism>
    <name type="scientific">Hathewaya histolytica</name>
    <name type="common">Clostridium histolyticum</name>
    <dbReference type="NCBI Taxonomy" id="1498"/>
    <lineage>
        <taxon>Bacteria</taxon>
        <taxon>Bacillati</taxon>
        <taxon>Bacillota</taxon>
        <taxon>Clostridia</taxon>
        <taxon>Eubacteriales</taxon>
        <taxon>Clostridiaceae</taxon>
        <taxon>Hathewaya</taxon>
    </lineage>
</organism>
<accession>Q46085</accession>
<proteinExistence type="evidence at protein level"/>
<comment type="function">
    <text evidence="8 9 12 15 16 19 20 22 24">Clostridial collagenases are among the most efficient degraders of eukaryotic collagen known; saprophytes use collagen as a carbon source while pathogens additionally digest collagen to aid in host colonization. Has both tripeptidylcarboxypeptidase on Gly-X-Y and endopeptidase activities; the endopeptidase cuts within the triple helix region of collagen while tripeptidylcarboxypeptidase successively digests the exposed ends, thus clostridial collagenases can digest large sections of collagen (PubMed:3002446). The full-length protein has collagenase activity, while both the 116 kDa and 98 kDa forms act on gelatin (PubMed:7961400). In vitro digestion of soluble calf skin collagen fibrils requires both ColG and ColH; ColG forms missing the second collagen-binding domain is also synergistic with ColH, although their overall efficiency is decreased (PubMed:18374061, PubMed:22099748). Digestion of collagen requires Ca(2+) and is inhibited by EDTA (PubMed:9452493). The activator domain (residues 119-388) and catalytic subdomain (330-601) open and close around substrate allowing digestion when the protein is closed (PubMed:23703618).</text>
</comment>
<comment type="catalytic activity">
    <reaction evidence="16 20 33 34 37">
        <text>Digestion of native collagen in the triple helical region at Xaa-|-Gly bonds. With synthetic peptides, a preference is shown for Gly at P3 and P1', Pro and Ala at P2 and P2', and hydroxyproline, Ala or Arg at P3'.</text>
        <dbReference type="EC" id="3.4.24.3"/>
    </reaction>
</comment>
<comment type="cofactor">
    <cofactor evidence="13 14 15 18 19 21">
        <name>Ca(2+)</name>
        <dbReference type="ChEBI" id="CHEBI:29108"/>
    </cofactor>
    <text evidence="13 14 15 18 19 21">Binds about 5 Ca(2+) per subunit (PubMed:6087888). The metallopeptidase and PKD domains each bind 1 Ca(2+), while CDB binds 2 (PubMed:23144249, PubMed:23703618, PubMed:25760606, PubMed:28820255). The protein is less elongated in the presence of EGTA (which chelates Ca(2+)) (PubMed:23561530).</text>
</comment>
<comment type="cofactor">
    <cofactor evidence="6 15 19 21">
        <name>Zn(2+)</name>
        <dbReference type="ChEBI" id="CHEBI:29105"/>
    </cofactor>
    <text evidence="6 15 19 21">Binds 1 Zn(2+) per subunit (PubMed:10217773, PubMed:23703618, PubMed:28820255, PubMed:6087888). A fourth ligand (Asp-421) not found in paralogs ColG and ColT is seen in the absence of inhibitor, which probably plays a role in substrate selection (PubMed:23703618). In the crystal with the N-aryl mercaptoacetamide-based inhibitor Zn is ligated only by the thiolate of the inhibitor (PubMed:28820255).</text>
</comment>
<comment type="activity regulation">
    <text evidence="9 19 24">Inhibited by EDTA (PubMed:9452493). Inhibited by 1-10-phenanthroline (PubMed:18937627). Inhibited by broad-spectrum zinc metalloprotease inhibitor batimastat (PubMed:28820255). N-aryl mercaptoacetamide-based inhibitors have been isolated that act on clostridial collagenases with submicromolar affinity while having negligibile activity on human collagenases (PubMed:28820255).</text>
</comment>
<comment type="biophysicochemical properties">
    <kinetics>
        <KM evidence="6">0.88 mM for Pz peptide (4-phenylazobenzyloxycarbonyl-Pro-Leu-Gly-Pro-D-Arg)</KM>
        <KM evidence="9">0.269 mM for furylacryloyl-Leu-Gly-Pro-Ala (FALGPA) with a catalytic fragment (residues 41-717)</KM>
        <KM evidence="19">62 uM for (7-methoxycoumarin-4-yl)acetyl-Ala-Gly-Pro-Pro-Gly-Pro-(N-3-(2,4-dinitrophenyl)-L-2,3-diaminopropionyl)-Gly-Arg-NH2 with peptidase fragment (residues 331-721)</KM>
        <Vmax evidence="9">12.1 umol/min/mg enzyme on FALGPA with a catalytic fragment (residues 41-717)</Vmax>
        <text evidence="6 9">kcat is 0.11 sec(-1) on Pz peptide with whole enzyme (PubMed:10217773). kcat is 15.9 sec(-1) on FALGPA with a catalytic fragment (residues 41-717) (PubMed:18937627).</text>
    </kinetics>
</comment>
<comment type="subcellular location">
    <subcellularLocation>
        <location evidence="8 12 22">Secreted</location>
    </subcellularLocation>
</comment>
<comment type="domain">
    <text evidence="9 13 14 15 18 24 35 40 41">The mature protein has 4 domains; a metalloprotease domain (S1, approximately residues 41-717), S2a (718-810, equivalent to PKD 1), S2b (811-904, equivalent to PKD 2) and a collagen-binding domain (S3, 905-1021) (PubMed:9452493, PubMed:9922257). The protein has an elongated shape, which lengthens further in calcium-chelated conditions; calcium-chelation also increases its susceptibility to exogenous proteases (PubMed:23561530). The S1 domain has the collagen hydrolytic activity (PubMed:18937627, PubMed:9452493). The metalloprotease S1 domain is composed of 3 subdomains which together resemble a saddle; an activator domain (residues 41-320), the catalytic peptidase subdomain (330-601) and a helper subdomain (609-721) (PubMed:23703618). Unlike the S2 domain in ColG, upon binding to Ca(2+) the midsections of S2a and S2b remain rigid; Ca(2+) binding confers thermostability (PubMed:25760606). Ca(2+)-binding also alters the orientation of the N-terminal linker of S2b so it lies along the long axis of the domain (PubMed:25760606). S3 has collagen-binding activity (PubMed:9452493). The structure of S3 becomes more thermostable when it is bound to Ca(2+) (PubMed:23144249). Isolated CBD S3 binds unidirectionally to the C-terminus of the collagen triple helix via a surface cleft (PubMed:23144249).</text>
</comment>
<comment type="PTM">
    <text evidence="22 27">Upon purification gives rise to 98 kDa, 105 kDa and 116 kDa (full-length) proteins, all of which have the same N-terminus (PubMed:7961400, PubMed:9922257).</text>
</comment>
<comment type="biotechnology">
    <text evidence="32">Widely used for tissue dissociation due to its potent activity on connective tissue.</text>
</comment>
<comment type="biotechnology">
    <text evidence="8 12">A mix of ColG and ColH is used for isolation of pancreatic islet cells for subsequent transplantation.</text>
</comment>
<comment type="biotechnology">
    <text evidence="26">A mix of ColG and ColH has been used to allow release of retained placenta in cows and mares, and its use in humans has been proposed.</text>
</comment>
<comment type="biotechnology">
    <text evidence="25">Has been used to anchor otherwise diffusible proteins to the host extracellular matrix. Fusions between the collagen-binding domain (S2B plus S3) and rat epidermal growth factor or human basic fibroblast growth factor (bFGF) were injected subcutaneously into adult male BALB/c-nu mice. The fusion proteins remained at the sites of injection for up to 10 days, and bFGF strongly stimulated fibroblast growth (PubMed:9618531).</text>
</comment>
<comment type="biotechnology">
    <text evidence="19">N-aryl mercaptoacetamide-based inhibitors with submicromolar affinity for clostridial collagenases but negligibile activity on human collagenases have been discovered that may lead to promising anti-infective drugs against Clostridia (PubMed:28820255).</text>
</comment>
<comment type="pharmaceutical">
    <text evidence="11">SANTYL Ointment (Smith and Nephew, Inc.) is indicated for debriding chronic dermal ulcers and severely burned areas. It is unclear which of the collagenases from this bacteria is in the ointment.</text>
</comment>
<comment type="pharmaceutical">
    <text evidence="7 10 17 23">Xiaflex (Endo Pharmaceuticals, Inc.) is a mix of H.histolytica collagenases (ColG and ColH) used to treat both Dupuytren disease and Peyronie disease. Dupuytren disease is a progressive genetic disorder of pathologic collagen production and deposition under the skin of the hand that causes the fingers to be drawn into the palm, leading to flexion contractures of the joints, which can severely limit hand function. Injections of collagenase may reduce these joint contractures (PubMed:10913202, PubMed:19726771). Peyronie disease (PD) is characterized by a disorganized, excessive deposition of collagen that forms a plaque within the penis. The plaque restricts lengthening on the affected side during erection, which can lead to penile curvature deformity, discomfort and erectile dysfunction, and can eventually lead to psychosocial effects such as depression and relationship difficulties. Studies have shown the clinical efficacy of collagenase injection for reducing penile curvature deformity and PD symptom bother (PubMed:25711400, PubMed:8417217).</text>
</comment>
<comment type="miscellaneous">
    <text evidence="32">Clostridial collagenases enable the bacteria to infiltrate and colonize host tissue, and contribute to gas gangrene (myonecrosis) pathogenesis.</text>
</comment>
<comment type="similarity">
    <text evidence="38 41">Belongs to the peptidase M9B family. Collagenase subfamily.</text>
</comment>
<name>COLH_HATHI</name>